<comment type="function">
    <text evidence="1">Component of the RavA-ViaA chaperone complex, which may act on the membrane to optimize the function of some of the respiratory chains. RavA functions as an ATPase.</text>
</comment>
<comment type="catalytic activity">
    <reaction evidence="1">
        <text>ATP + H2O = ADP + phosphate + H(+)</text>
        <dbReference type="Rhea" id="RHEA:13065"/>
        <dbReference type="ChEBI" id="CHEBI:15377"/>
        <dbReference type="ChEBI" id="CHEBI:15378"/>
        <dbReference type="ChEBI" id="CHEBI:30616"/>
        <dbReference type="ChEBI" id="CHEBI:43474"/>
        <dbReference type="ChEBI" id="CHEBI:456216"/>
    </reaction>
</comment>
<comment type="activity regulation">
    <text evidence="1">ATPase activity is stimulated by ViaA.</text>
</comment>
<comment type="subunit">
    <text evidence="1">Homohexamer. Interacts with ViaA.</text>
</comment>
<comment type="subcellular location">
    <subcellularLocation>
        <location evidence="1">Cytoplasm</location>
    </subcellularLocation>
</comment>
<comment type="similarity">
    <text evidence="1">Belongs to the RavA family.</text>
</comment>
<name>RAVA_SALPA</name>
<sequence length="498" mass="56717">MAHPHLLAERISRLSSALEKGLYERSHAIRLCLLAALSGESVFLLGPPGIAKSLIARRLKFAFQRARAFEYLMTRFSTPEEVFGPLSIQALKDEGRYERLTTGYLPEAEIVFLDEIWKAGPAILNTLLTAINERHFRNGAFEEKIPMRLLVAASNELPEADSSLEALYDRMLIRLWLDKVQDKANFRSMLISQQDESDNPVPASLQVSDEEYQQWQKDIGAISLPDPVFELIFTLRQQLDNLPNAPYVSDRRWKKAIRLLQASAFFSGRDAVAPIDLILLKDCLWYDAQSLNLMQQQLEILMTGHAWQQQAMLTRLGGIVQRRLQLQQQQSDKTAFTVIKEGGMFSRRPHYTLPPEASASTLTLLLQKPLKLHDMEVIHITFDRSALELWLTKGGEIRGKLNGIGFAQTLNMEVDNAQHLVVRDISLQGTRLALPGTAEDSMPAEIKQQLETLENDWRQQHTRFSEQQHCLFIHSDWLGRIEASLQDVGEQIRQAKQC</sequence>
<proteinExistence type="inferred from homology"/>
<reference key="1">
    <citation type="journal article" date="2004" name="Nat. Genet.">
        <title>Comparison of genome degradation in Paratyphi A and Typhi, human-restricted serovars of Salmonella enterica that cause typhoid.</title>
        <authorList>
            <person name="McClelland M."/>
            <person name="Sanderson K.E."/>
            <person name="Clifton S.W."/>
            <person name="Latreille P."/>
            <person name="Porwollik S."/>
            <person name="Sabo A."/>
            <person name="Meyer R."/>
            <person name="Bieri T."/>
            <person name="Ozersky P."/>
            <person name="McLellan M."/>
            <person name="Harkins C.R."/>
            <person name="Wang C."/>
            <person name="Nguyen C."/>
            <person name="Berghoff A."/>
            <person name="Elliott G."/>
            <person name="Kohlberg S."/>
            <person name="Strong C."/>
            <person name="Du F."/>
            <person name="Carter J."/>
            <person name="Kremizki C."/>
            <person name="Layman D."/>
            <person name="Leonard S."/>
            <person name="Sun H."/>
            <person name="Fulton L."/>
            <person name="Nash W."/>
            <person name="Miner T."/>
            <person name="Minx P."/>
            <person name="Delehaunty K."/>
            <person name="Fronick C."/>
            <person name="Magrini V."/>
            <person name="Nhan M."/>
            <person name="Warren W."/>
            <person name="Florea L."/>
            <person name="Spieth J."/>
            <person name="Wilson R.K."/>
        </authorList>
    </citation>
    <scope>NUCLEOTIDE SEQUENCE [LARGE SCALE GENOMIC DNA]</scope>
    <source>
        <strain>ATCC 9150 / SARB42</strain>
    </source>
</reference>
<organism>
    <name type="scientific">Salmonella paratyphi A (strain ATCC 9150 / SARB42)</name>
    <dbReference type="NCBI Taxonomy" id="295319"/>
    <lineage>
        <taxon>Bacteria</taxon>
        <taxon>Pseudomonadati</taxon>
        <taxon>Pseudomonadota</taxon>
        <taxon>Gammaproteobacteria</taxon>
        <taxon>Enterobacterales</taxon>
        <taxon>Enterobacteriaceae</taxon>
        <taxon>Salmonella</taxon>
    </lineage>
</organism>
<keyword id="KW-0067">ATP-binding</keyword>
<keyword id="KW-0143">Chaperone</keyword>
<keyword id="KW-0963">Cytoplasm</keyword>
<keyword id="KW-0378">Hydrolase</keyword>
<keyword id="KW-0547">Nucleotide-binding</keyword>
<protein>
    <recommendedName>
        <fullName evidence="1">Regulatory ATPase RavA</fullName>
        <ecNumber evidence="1">3.6.1.-</ecNumber>
    </recommendedName>
    <alternativeName>
        <fullName evidence="1">Regulatory ATPase variant A</fullName>
    </alternativeName>
</protein>
<feature type="chain" id="PRO_0000209375" description="Regulatory ATPase RavA">
    <location>
        <begin position="1"/>
        <end position="498"/>
    </location>
</feature>
<feature type="binding site" evidence="1">
    <location>
        <position position="23"/>
    </location>
    <ligand>
        <name>ADP</name>
        <dbReference type="ChEBI" id="CHEBI:456216"/>
    </ligand>
</feature>
<feature type="binding site" evidence="1">
    <location>
        <position position="49"/>
    </location>
    <ligand>
        <name>ADP</name>
        <dbReference type="ChEBI" id="CHEBI:456216"/>
    </ligand>
</feature>
<feature type="binding site" evidence="1">
    <location>
        <position position="50"/>
    </location>
    <ligand>
        <name>ADP</name>
        <dbReference type="ChEBI" id="CHEBI:456216"/>
    </ligand>
</feature>
<feature type="binding site" evidence="1">
    <location>
        <position position="51"/>
    </location>
    <ligand>
        <name>ADP</name>
        <dbReference type="ChEBI" id="CHEBI:456216"/>
    </ligand>
</feature>
<feature type="binding site" evidence="1">
    <location>
        <position position="52"/>
    </location>
    <ligand>
        <name>ADP</name>
        <dbReference type="ChEBI" id="CHEBI:456216"/>
    </ligand>
</feature>
<feature type="binding site" evidence="1">
    <location>
        <position position="53"/>
    </location>
    <ligand>
        <name>ADP</name>
        <dbReference type="ChEBI" id="CHEBI:456216"/>
    </ligand>
</feature>
<feature type="binding site" evidence="1">
    <location>
        <position position="54"/>
    </location>
    <ligand>
        <name>ADP</name>
        <dbReference type="ChEBI" id="CHEBI:456216"/>
    </ligand>
</feature>
<feature type="binding site" evidence="1">
    <location>
        <position position="196"/>
    </location>
    <ligand>
        <name>ADP</name>
        <dbReference type="ChEBI" id="CHEBI:456216"/>
    </ligand>
</feature>
<dbReference type="EC" id="3.6.1.-" evidence="1"/>
<dbReference type="EMBL" id="CP000026">
    <property type="protein sequence ID" value="AAV79510.1"/>
    <property type="molecule type" value="Genomic_DNA"/>
</dbReference>
<dbReference type="RefSeq" id="WP_000940977.1">
    <property type="nucleotide sequence ID" value="NC_006511.1"/>
</dbReference>
<dbReference type="SMR" id="Q5PJX8"/>
<dbReference type="KEGG" id="spt:SPA3718"/>
<dbReference type="HOGENOM" id="CLU_018678_1_0_6"/>
<dbReference type="Proteomes" id="UP000008185">
    <property type="component" value="Chromosome"/>
</dbReference>
<dbReference type="GO" id="GO:0005737">
    <property type="term" value="C:cytoplasm"/>
    <property type="evidence" value="ECO:0007669"/>
    <property type="project" value="UniProtKB-SubCell"/>
</dbReference>
<dbReference type="GO" id="GO:0005524">
    <property type="term" value="F:ATP binding"/>
    <property type="evidence" value="ECO:0007669"/>
    <property type="project" value="UniProtKB-KW"/>
</dbReference>
<dbReference type="GO" id="GO:0016887">
    <property type="term" value="F:ATP hydrolysis activity"/>
    <property type="evidence" value="ECO:0007669"/>
    <property type="project" value="UniProtKB-UniRule"/>
</dbReference>
<dbReference type="CDD" id="cd00009">
    <property type="entry name" value="AAA"/>
    <property type="match status" value="1"/>
</dbReference>
<dbReference type="FunFam" id="3.40.50.300:FF:000410">
    <property type="entry name" value="ATPase RavA"/>
    <property type="match status" value="1"/>
</dbReference>
<dbReference type="Gene3D" id="1.20.58.1510">
    <property type="match status" value="1"/>
</dbReference>
<dbReference type="Gene3D" id="2.40.128.430">
    <property type="match status" value="1"/>
</dbReference>
<dbReference type="Gene3D" id="3.40.50.300">
    <property type="entry name" value="P-loop containing nucleotide triphosphate hydrolases"/>
    <property type="match status" value="1"/>
</dbReference>
<dbReference type="HAMAP" id="MF_01625">
    <property type="entry name" value="ATPase_RavA"/>
    <property type="match status" value="1"/>
</dbReference>
<dbReference type="InterPro" id="IPR003593">
    <property type="entry name" value="AAA+_ATPase"/>
</dbReference>
<dbReference type="InterPro" id="IPR023671">
    <property type="entry name" value="ATPase_RavA"/>
</dbReference>
<dbReference type="InterPro" id="IPR022547">
    <property type="entry name" value="ATPase_RavA_C"/>
</dbReference>
<dbReference type="InterPro" id="IPR045427">
    <property type="entry name" value="MoxR"/>
</dbReference>
<dbReference type="InterPro" id="IPR027417">
    <property type="entry name" value="P-loop_NTPase"/>
</dbReference>
<dbReference type="InterPro" id="IPR041538">
    <property type="entry name" value="RavA-like_AAA_lid"/>
</dbReference>
<dbReference type="InterPro" id="IPR050513">
    <property type="entry name" value="RavA_ATPases"/>
</dbReference>
<dbReference type="InterPro" id="IPR046898">
    <property type="entry name" value="RavA_LARA_dom"/>
</dbReference>
<dbReference type="InterPro" id="IPR046932">
    <property type="entry name" value="RavA_LARA_sf"/>
</dbReference>
<dbReference type="NCBIfam" id="NF010054">
    <property type="entry name" value="PRK13531.1"/>
    <property type="match status" value="1"/>
</dbReference>
<dbReference type="PANTHER" id="PTHR32204">
    <property type="entry name" value="ATPASE RAVA"/>
    <property type="match status" value="1"/>
</dbReference>
<dbReference type="PANTHER" id="PTHR32204:SF0">
    <property type="entry name" value="ATPASE RAVA"/>
    <property type="match status" value="1"/>
</dbReference>
<dbReference type="Pfam" id="PF17868">
    <property type="entry name" value="AAA_lid_8"/>
    <property type="match status" value="1"/>
</dbReference>
<dbReference type="Pfam" id="PF12592">
    <property type="entry name" value="ATPase_RavA_C"/>
    <property type="match status" value="1"/>
</dbReference>
<dbReference type="Pfam" id="PF20030">
    <property type="entry name" value="bpMoxR"/>
    <property type="match status" value="1"/>
</dbReference>
<dbReference type="Pfam" id="PF20265">
    <property type="entry name" value="LARA_dom"/>
    <property type="match status" value="1"/>
</dbReference>
<dbReference type="SMART" id="SM00382">
    <property type="entry name" value="AAA"/>
    <property type="match status" value="1"/>
</dbReference>
<dbReference type="SUPFAM" id="SSF52540">
    <property type="entry name" value="P-loop containing nucleoside triphosphate hydrolases"/>
    <property type="match status" value="1"/>
</dbReference>
<accession>Q5PJX8</accession>
<gene>
    <name evidence="1" type="primary">ravA</name>
    <name type="ordered locus">SPA3718</name>
</gene>
<evidence type="ECO:0000255" key="1">
    <source>
        <dbReference type="HAMAP-Rule" id="MF_01625"/>
    </source>
</evidence>